<feature type="chain" id="PRO_0000137616" description="GTP-dependent dephospho-CoA kinase">
    <location>
        <begin position="1"/>
        <end position="179"/>
    </location>
</feature>
<feature type="binding site" evidence="1">
    <location>
        <position position="50"/>
    </location>
    <ligand>
        <name>GTP</name>
        <dbReference type="ChEBI" id="CHEBI:37565"/>
    </ligand>
</feature>
<feature type="binding site" evidence="1">
    <location>
        <position position="51"/>
    </location>
    <ligand>
        <name>GTP</name>
        <dbReference type="ChEBI" id="CHEBI:37565"/>
    </ligand>
</feature>
<feature type="binding site" evidence="1">
    <location>
        <position position="52"/>
    </location>
    <ligand>
        <name>GTP</name>
        <dbReference type="ChEBI" id="CHEBI:37565"/>
    </ligand>
</feature>
<feature type="binding site" evidence="1">
    <location>
        <position position="69"/>
    </location>
    <ligand>
        <name>GTP</name>
        <dbReference type="ChEBI" id="CHEBI:37565"/>
    </ligand>
</feature>
<feature type="binding site" evidence="1">
    <location>
        <position position="71"/>
    </location>
    <ligand>
        <name>GTP</name>
        <dbReference type="ChEBI" id="CHEBI:37565"/>
    </ligand>
</feature>
<feature type="binding site" evidence="1">
    <location>
        <position position="126"/>
    </location>
    <ligand>
        <name>GTP</name>
        <dbReference type="ChEBI" id="CHEBI:37565"/>
    </ligand>
</feature>
<gene>
    <name type="ordered locus">PH1909</name>
</gene>
<keyword id="KW-0173">Coenzyme A biosynthesis</keyword>
<keyword id="KW-0342">GTP-binding</keyword>
<keyword id="KW-0418">Kinase</keyword>
<keyword id="KW-0547">Nucleotide-binding</keyword>
<keyword id="KW-0808">Transferase</keyword>
<proteinExistence type="inferred from homology"/>
<reference key="1">
    <citation type="journal article" date="1998" name="DNA Res.">
        <title>Complete sequence and gene organization of the genome of a hyper-thermophilic archaebacterium, Pyrococcus horikoshii OT3.</title>
        <authorList>
            <person name="Kawarabayasi Y."/>
            <person name="Sawada M."/>
            <person name="Horikawa H."/>
            <person name="Haikawa Y."/>
            <person name="Hino Y."/>
            <person name="Yamamoto S."/>
            <person name="Sekine M."/>
            <person name="Baba S."/>
            <person name="Kosugi H."/>
            <person name="Hosoyama A."/>
            <person name="Nagai Y."/>
            <person name="Sakai M."/>
            <person name="Ogura K."/>
            <person name="Otsuka R."/>
            <person name="Nakazawa H."/>
            <person name="Takamiya M."/>
            <person name="Ohfuku Y."/>
            <person name="Funahashi T."/>
            <person name="Tanaka T."/>
            <person name="Kudoh Y."/>
            <person name="Yamazaki J."/>
            <person name="Kushida N."/>
            <person name="Oguchi A."/>
            <person name="Aoki K."/>
            <person name="Yoshizawa T."/>
            <person name="Nakamura Y."/>
            <person name="Robb F.T."/>
            <person name="Horikoshi K."/>
            <person name="Masuchi Y."/>
            <person name="Shizuya H."/>
            <person name="Kikuchi H."/>
        </authorList>
    </citation>
    <scope>NUCLEOTIDE SEQUENCE [LARGE SCALE GENOMIC DNA]</scope>
    <source>
        <strain>ATCC 700860 / DSM 12428 / JCM 9974 / NBRC 100139 / OT-3</strain>
    </source>
</reference>
<sequence>MRVVFKLPDELRQELKNPLGELIEGNIPEPYVKAKNIIEGDDGVLITVGDVVTENIMRVGLNPNLAIYDHKTERREYKPRIIINGVLLTVKNPPGTITLPLLKSIKKAYSLILNGKSVHIVVNGEEDLATIPAVLYAPLGATVIYGQPKRGIVLIKVTNECKRRCAKIMRRMEVVRDGD</sequence>
<accession>O59572</accession>
<protein>
    <recommendedName>
        <fullName evidence="1">GTP-dependent dephospho-CoA kinase</fullName>
        <ecNumber evidence="1">2.7.1.237</ecNumber>
    </recommendedName>
    <alternativeName>
        <fullName evidence="1">Dephospho-coenzyme A kinase</fullName>
        <shortName evidence="1">DPCK</shortName>
    </alternativeName>
</protein>
<name>DPCKG_PYRHO</name>
<comment type="function">
    <text evidence="1">Catalyzes the GTP-dependent phosphorylation of the 3'-hydroxyl group of dephosphocoenzyme A to form coenzyme A (CoA).</text>
</comment>
<comment type="catalytic activity">
    <reaction evidence="1">
        <text>3'-dephospho-CoA + GTP = GDP + CoA + H(+)</text>
        <dbReference type="Rhea" id="RHEA:61156"/>
        <dbReference type="ChEBI" id="CHEBI:15378"/>
        <dbReference type="ChEBI" id="CHEBI:37565"/>
        <dbReference type="ChEBI" id="CHEBI:57287"/>
        <dbReference type="ChEBI" id="CHEBI:57328"/>
        <dbReference type="ChEBI" id="CHEBI:58189"/>
        <dbReference type="EC" id="2.7.1.237"/>
    </reaction>
</comment>
<comment type="pathway">
    <text evidence="1">Cofactor biosynthesis; coenzyme A biosynthesis.</text>
</comment>
<comment type="similarity">
    <text evidence="1">Belongs to the GTP-dependent DPCK family.</text>
</comment>
<organism>
    <name type="scientific">Pyrococcus horikoshii (strain ATCC 700860 / DSM 12428 / JCM 9974 / NBRC 100139 / OT-3)</name>
    <dbReference type="NCBI Taxonomy" id="70601"/>
    <lineage>
        <taxon>Archaea</taxon>
        <taxon>Methanobacteriati</taxon>
        <taxon>Methanobacteriota</taxon>
        <taxon>Thermococci</taxon>
        <taxon>Thermococcales</taxon>
        <taxon>Thermococcaceae</taxon>
        <taxon>Pyrococcus</taxon>
    </lineage>
</organism>
<evidence type="ECO:0000255" key="1">
    <source>
        <dbReference type="HAMAP-Rule" id="MF_00590"/>
    </source>
</evidence>
<dbReference type="EC" id="2.7.1.237" evidence="1"/>
<dbReference type="EMBL" id="BA000001">
    <property type="protein sequence ID" value="BAA31034.1"/>
    <property type="molecule type" value="Genomic_DNA"/>
</dbReference>
<dbReference type="PIR" id="C71205">
    <property type="entry name" value="C71205"/>
</dbReference>
<dbReference type="RefSeq" id="WP_010885974.1">
    <property type="nucleotide sequence ID" value="NC_000961.1"/>
</dbReference>
<dbReference type="SMR" id="O59572"/>
<dbReference type="STRING" id="70601.gene:9378919"/>
<dbReference type="EnsemblBacteria" id="BAA31034">
    <property type="protein sequence ID" value="BAA31034"/>
    <property type="gene ID" value="BAA31034"/>
</dbReference>
<dbReference type="GeneID" id="1442756"/>
<dbReference type="KEGG" id="pho:PH1909"/>
<dbReference type="eggNOG" id="arCOG04076">
    <property type="taxonomic scope" value="Archaea"/>
</dbReference>
<dbReference type="OrthoDB" id="15447at2157"/>
<dbReference type="UniPathway" id="UPA00241"/>
<dbReference type="Proteomes" id="UP000000752">
    <property type="component" value="Chromosome"/>
</dbReference>
<dbReference type="GO" id="GO:0005525">
    <property type="term" value="F:GTP binding"/>
    <property type="evidence" value="ECO:0007669"/>
    <property type="project" value="UniProtKB-UniRule"/>
</dbReference>
<dbReference type="GO" id="GO:0016301">
    <property type="term" value="F:kinase activity"/>
    <property type="evidence" value="ECO:0007669"/>
    <property type="project" value="UniProtKB-UniRule"/>
</dbReference>
<dbReference type="GO" id="GO:0015937">
    <property type="term" value="P:coenzyme A biosynthetic process"/>
    <property type="evidence" value="ECO:0007669"/>
    <property type="project" value="UniProtKB-UniRule"/>
</dbReference>
<dbReference type="HAMAP" id="MF_00590">
    <property type="entry name" value="Dephospho_CoA_kinase_GTP_dep"/>
    <property type="match status" value="1"/>
</dbReference>
<dbReference type="InterPro" id="IPR054930">
    <property type="entry name" value="deph_CoA_kin_Thcocales"/>
</dbReference>
<dbReference type="InterPro" id="IPR007164">
    <property type="entry name" value="GTP-dep_dephospho-CoA_kin"/>
</dbReference>
<dbReference type="NCBIfam" id="NF041125">
    <property type="entry name" value="deph_CoA_kin_Thcocales"/>
    <property type="match status" value="1"/>
</dbReference>
<dbReference type="NCBIfam" id="NF002246">
    <property type="entry name" value="PRK01160.1-1"/>
    <property type="match status" value="1"/>
</dbReference>
<dbReference type="PANTHER" id="PTHR40732:SF1">
    <property type="entry name" value="GTP-DEPENDENT DEPHOSPHO-COA KINASE"/>
    <property type="match status" value="1"/>
</dbReference>
<dbReference type="PANTHER" id="PTHR40732">
    <property type="entry name" value="UPF0218 PROTEIN TK1697"/>
    <property type="match status" value="1"/>
</dbReference>
<dbReference type="Pfam" id="PF04019">
    <property type="entry name" value="DUF359"/>
    <property type="match status" value="1"/>
</dbReference>
<dbReference type="PIRSF" id="PIRSF006533">
    <property type="entry name" value="UCP006533"/>
    <property type="match status" value="1"/>
</dbReference>